<dbReference type="EC" id="2.6.99.2" evidence="1"/>
<dbReference type="EMBL" id="AE000511">
    <property type="protein sequence ID" value="AAD08620.1"/>
    <property type="molecule type" value="Genomic_DNA"/>
</dbReference>
<dbReference type="PIR" id="F64717">
    <property type="entry name" value="F64717"/>
</dbReference>
<dbReference type="RefSeq" id="NP_208373.1">
    <property type="nucleotide sequence ID" value="NC_000915.1"/>
</dbReference>
<dbReference type="RefSeq" id="WP_001210849.1">
    <property type="nucleotide sequence ID" value="NC_018939.1"/>
</dbReference>
<dbReference type="SMR" id="O26102"/>
<dbReference type="FunCoup" id="O26102">
    <property type="interactions" value="238"/>
</dbReference>
<dbReference type="STRING" id="85962.HP_1582"/>
<dbReference type="PaxDb" id="85962-C694_08195"/>
<dbReference type="EnsemblBacteria" id="AAD08620">
    <property type="protein sequence ID" value="AAD08620"/>
    <property type="gene ID" value="HP_1582"/>
</dbReference>
<dbReference type="KEGG" id="heo:C694_08195"/>
<dbReference type="KEGG" id="hpy:HP_1582"/>
<dbReference type="PATRIC" id="fig|85962.47.peg.1700"/>
<dbReference type="eggNOG" id="COG0854">
    <property type="taxonomic scope" value="Bacteria"/>
</dbReference>
<dbReference type="InParanoid" id="O26102"/>
<dbReference type="OrthoDB" id="9806590at2"/>
<dbReference type="PhylomeDB" id="O26102"/>
<dbReference type="UniPathway" id="UPA00244">
    <property type="reaction ID" value="UER00313"/>
</dbReference>
<dbReference type="Proteomes" id="UP000000429">
    <property type="component" value="Chromosome"/>
</dbReference>
<dbReference type="GO" id="GO:0005829">
    <property type="term" value="C:cytosol"/>
    <property type="evidence" value="ECO:0000318"/>
    <property type="project" value="GO_Central"/>
</dbReference>
<dbReference type="GO" id="GO:0033856">
    <property type="term" value="F:pyridoxine 5'-phosphate synthase activity"/>
    <property type="evidence" value="ECO:0000318"/>
    <property type="project" value="GO_Central"/>
</dbReference>
<dbReference type="GO" id="GO:0008615">
    <property type="term" value="P:pyridoxine biosynthetic process"/>
    <property type="evidence" value="ECO:0000318"/>
    <property type="project" value="GO_Central"/>
</dbReference>
<dbReference type="CDD" id="cd00003">
    <property type="entry name" value="PNPsynthase"/>
    <property type="match status" value="1"/>
</dbReference>
<dbReference type="FunFam" id="3.20.20.70:FF:000264">
    <property type="entry name" value="Pyridoxine 5'-phosphate synthase"/>
    <property type="match status" value="1"/>
</dbReference>
<dbReference type="Gene3D" id="3.20.20.70">
    <property type="entry name" value="Aldolase class I"/>
    <property type="match status" value="1"/>
</dbReference>
<dbReference type="HAMAP" id="MF_00279">
    <property type="entry name" value="PdxJ"/>
    <property type="match status" value="1"/>
</dbReference>
<dbReference type="InterPro" id="IPR013785">
    <property type="entry name" value="Aldolase_TIM"/>
</dbReference>
<dbReference type="InterPro" id="IPR004569">
    <property type="entry name" value="PyrdxlP_synth_PdxJ"/>
</dbReference>
<dbReference type="InterPro" id="IPR036130">
    <property type="entry name" value="Pyridoxine-5'_phos_synth"/>
</dbReference>
<dbReference type="NCBIfam" id="TIGR00559">
    <property type="entry name" value="pdxJ"/>
    <property type="match status" value="1"/>
</dbReference>
<dbReference type="NCBIfam" id="NF003625">
    <property type="entry name" value="PRK05265.1-3"/>
    <property type="match status" value="1"/>
</dbReference>
<dbReference type="NCBIfam" id="NF003627">
    <property type="entry name" value="PRK05265.1-5"/>
    <property type="match status" value="1"/>
</dbReference>
<dbReference type="PANTHER" id="PTHR30456">
    <property type="entry name" value="PYRIDOXINE 5'-PHOSPHATE SYNTHASE"/>
    <property type="match status" value="1"/>
</dbReference>
<dbReference type="PANTHER" id="PTHR30456:SF0">
    <property type="entry name" value="PYRIDOXINE 5'-PHOSPHATE SYNTHASE"/>
    <property type="match status" value="1"/>
</dbReference>
<dbReference type="Pfam" id="PF03740">
    <property type="entry name" value="PdxJ"/>
    <property type="match status" value="1"/>
</dbReference>
<dbReference type="SUPFAM" id="SSF63892">
    <property type="entry name" value="Pyridoxine 5'-phosphate synthase"/>
    <property type="match status" value="1"/>
</dbReference>
<organism>
    <name type="scientific">Helicobacter pylori (strain ATCC 700392 / 26695)</name>
    <name type="common">Campylobacter pylori</name>
    <dbReference type="NCBI Taxonomy" id="85962"/>
    <lineage>
        <taxon>Bacteria</taxon>
        <taxon>Pseudomonadati</taxon>
        <taxon>Campylobacterota</taxon>
        <taxon>Epsilonproteobacteria</taxon>
        <taxon>Campylobacterales</taxon>
        <taxon>Helicobacteraceae</taxon>
        <taxon>Helicobacter</taxon>
    </lineage>
</organism>
<name>PDXJ_HELPY</name>
<keyword id="KW-0963">Cytoplasm</keyword>
<keyword id="KW-0664">Pyridoxine biosynthesis</keyword>
<keyword id="KW-1185">Reference proteome</keyword>
<keyword id="KW-0808">Transferase</keyword>
<feature type="chain" id="PRO_0000190117" description="Pyridoxine 5'-phosphate synthase">
    <location>
        <begin position="1"/>
        <end position="262"/>
    </location>
</feature>
<feature type="active site" description="Proton acceptor" evidence="1">
    <location>
        <position position="43"/>
    </location>
</feature>
<feature type="active site" description="Proton acceptor" evidence="1">
    <location>
        <position position="70"/>
    </location>
</feature>
<feature type="active site" description="Proton donor" evidence="1">
    <location>
        <position position="215"/>
    </location>
</feature>
<feature type="binding site" evidence="1">
    <location>
        <position position="6"/>
    </location>
    <ligand>
        <name>3-amino-2-oxopropyl phosphate</name>
        <dbReference type="ChEBI" id="CHEBI:57279"/>
    </ligand>
</feature>
<feature type="binding site" evidence="1">
    <location>
        <begin position="8"/>
        <end position="9"/>
    </location>
    <ligand>
        <name>1-deoxy-D-xylulose 5-phosphate</name>
        <dbReference type="ChEBI" id="CHEBI:57792"/>
    </ligand>
</feature>
<feature type="binding site" evidence="1">
    <location>
        <position position="17"/>
    </location>
    <ligand>
        <name>3-amino-2-oxopropyl phosphate</name>
        <dbReference type="ChEBI" id="CHEBI:57279"/>
    </ligand>
</feature>
<feature type="binding site" evidence="1">
    <location>
        <position position="45"/>
    </location>
    <ligand>
        <name>1-deoxy-D-xylulose 5-phosphate</name>
        <dbReference type="ChEBI" id="CHEBI:57792"/>
    </ligand>
</feature>
<feature type="binding site" evidence="1">
    <location>
        <position position="50"/>
    </location>
    <ligand>
        <name>1-deoxy-D-xylulose 5-phosphate</name>
        <dbReference type="ChEBI" id="CHEBI:57792"/>
    </ligand>
</feature>
<feature type="binding site" evidence="1">
    <location>
        <position position="102"/>
    </location>
    <ligand>
        <name>1-deoxy-D-xylulose 5-phosphate</name>
        <dbReference type="ChEBI" id="CHEBI:57792"/>
    </ligand>
</feature>
<feature type="binding site" evidence="1">
    <location>
        <position position="216"/>
    </location>
    <ligand>
        <name>3-amino-2-oxopropyl phosphate</name>
        <dbReference type="ChEBI" id="CHEBI:57279"/>
    </ligand>
</feature>
<feature type="binding site" evidence="1">
    <location>
        <begin position="237"/>
        <end position="238"/>
    </location>
    <ligand>
        <name>3-amino-2-oxopropyl phosphate</name>
        <dbReference type="ChEBI" id="CHEBI:57279"/>
    </ligand>
</feature>
<feature type="site" description="Transition state stabilizer" evidence="1">
    <location>
        <position position="151"/>
    </location>
</feature>
<comment type="function">
    <text evidence="1">Catalyzes the complicated ring closure reaction between the two acyclic compounds 1-deoxy-D-xylulose-5-phosphate (DXP) and 3-amino-2-oxopropyl phosphate (1-amino-acetone-3-phosphate or AAP) to form pyridoxine 5'-phosphate (PNP) and inorganic phosphate.</text>
</comment>
<comment type="catalytic activity">
    <reaction evidence="1">
        <text>3-amino-2-oxopropyl phosphate + 1-deoxy-D-xylulose 5-phosphate = pyridoxine 5'-phosphate + phosphate + 2 H2O + H(+)</text>
        <dbReference type="Rhea" id="RHEA:15265"/>
        <dbReference type="ChEBI" id="CHEBI:15377"/>
        <dbReference type="ChEBI" id="CHEBI:15378"/>
        <dbReference type="ChEBI" id="CHEBI:43474"/>
        <dbReference type="ChEBI" id="CHEBI:57279"/>
        <dbReference type="ChEBI" id="CHEBI:57792"/>
        <dbReference type="ChEBI" id="CHEBI:58589"/>
        <dbReference type="EC" id="2.6.99.2"/>
    </reaction>
</comment>
<comment type="pathway">
    <text evidence="1">Cofactor biosynthesis; pyridoxine 5'-phosphate biosynthesis; pyridoxine 5'-phosphate from D-erythrose 4-phosphate: step 5/5.</text>
</comment>
<comment type="subunit">
    <text evidence="1">Homooctamer; tetramer of dimers.</text>
</comment>
<comment type="subcellular location">
    <subcellularLocation>
        <location evidence="1">Cytoplasm</location>
    </subcellularLocation>
</comment>
<comment type="similarity">
    <text evidence="1">Belongs to the PNP synthase family.</text>
</comment>
<reference key="1">
    <citation type="journal article" date="1997" name="Nature">
        <title>The complete genome sequence of the gastric pathogen Helicobacter pylori.</title>
        <authorList>
            <person name="Tomb J.-F."/>
            <person name="White O."/>
            <person name="Kerlavage A.R."/>
            <person name="Clayton R.A."/>
            <person name="Sutton G.G."/>
            <person name="Fleischmann R.D."/>
            <person name="Ketchum K.A."/>
            <person name="Klenk H.-P."/>
            <person name="Gill S.R."/>
            <person name="Dougherty B.A."/>
            <person name="Nelson K.E."/>
            <person name="Quackenbush J."/>
            <person name="Zhou L."/>
            <person name="Kirkness E.F."/>
            <person name="Peterson S.N."/>
            <person name="Loftus B.J."/>
            <person name="Richardson D.L."/>
            <person name="Dodson R.J."/>
            <person name="Khalak H.G."/>
            <person name="Glodek A."/>
            <person name="McKenney K."/>
            <person name="FitzGerald L.M."/>
            <person name="Lee N."/>
            <person name="Adams M.D."/>
            <person name="Hickey E.K."/>
            <person name="Berg D.E."/>
            <person name="Gocayne J.D."/>
            <person name="Utterback T.R."/>
            <person name="Peterson J.D."/>
            <person name="Kelley J.M."/>
            <person name="Cotton M.D."/>
            <person name="Weidman J.F."/>
            <person name="Fujii C."/>
            <person name="Bowman C."/>
            <person name="Watthey L."/>
            <person name="Wallin E."/>
            <person name="Hayes W.S."/>
            <person name="Borodovsky M."/>
            <person name="Karp P.D."/>
            <person name="Smith H.O."/>
            <person name="Fraser C.M."/>
            <person name="Venter J.C."/>
        </authorList>
    </citation>
    <scope>NUCLEOTIDE SEQUENCE [LARGE SCALE GENOMIC DNA]</scope>
    <source>
        <strain>ATCC 700392 / 26695</strain>
    </source>
</reference>
<evidence type="ECO:0000255" key="1">
    <source>
        <dbReference type="HAMAP-Rule" id="MF_00279"/>
    </source>
</evidence>
<gene>
    <name evidence="1" type="primary">pdxJ</name>
    <name type="ordered locus">HP_1582</name>
</gene>
<sequence length="262" mass="29721">MRFGLNIDHIVTLREIRKTYEPEILEALFIAKNTHKVDLITIHLREDRRHIQNEDVLKLLEISPLPINIECSINAEITDFLCSLKNKPSKVTIVPENRNEVTTEGGLDCSLKGLGEVIRAYHNKGIEVSLFIDPLKDALHFAREHQVKQVEFHTGVYANLHNALYSNANNQIHAISVLKDKSPKELKEELHNAFLQLRRMSKEAFFMGITACAGHGLNYTNVKELLKIPSLRELNIGHSVVSKAVLVGLEKAILEMAQLIKR</sequence>
<accession>O26102</accession>
<protein>
    <recommendedName>
        <fullName evidence="1">Pyridoxine 5'-phosphate synthase</fullName>
        <shortName evidence="1">PNP synthase</shortName>
        <ecNumber evidence="1">2.6.99.2</ecNumber>
    </recommendedName>
</protein>
<proteinExistence type="inferred from homology"/>